<gene>
    <name evidence="1" type="primary">purA</name>
    <name type="ordered locus">HCH_05377</name>
</gene>
<sequence length="432" mass="47171">MGKNVVILGTQWGDEGKGKIVDLLTEEVAAVARFQGGHNAGHTLVIDGQKTVLHLIPSGILRSNVACLIGNGVVLAPDALLSEIKTLEDKGVPVRQRLFLSPACPLILPYHKALDLAREERLGSAKIGTTGRGIGPAYEDKVARRGVRLGDLAKPERFAEKLKEIMQYQNFVLEHYYKVAPIDYQKTLDETLKMAEELLPMMADVTDMLHEFRKRDENVLFEGAQGSLLDIDLGTYPYVTSSNTTAGGTATGSGFGPMYLDYVLGITKAYATRVGSGPFPTELFDDVGAYLAKKGNEFGATTGRPRRCGWFDAVALRHAIQINSVSGICLTKLDVLDGLDVVKVCVGYRTADGAEITRPPIDCEAFGEVEPVYEELPGWKESTFGVKRVEDLPKNAQDYIAFLEKQIEAPIDVISTGPDRNETITLRHPFSA</sequence>
<keyword id="KW-0963">Cytoplasm</keyword>
<keyword id="KW-0342">GTP-binding</keyword>
<keyword id="KW-0436">Ligase</keyword>
<keyword id="KW-0460">Magnesium</keyword>
<keyword id="KW-0479">Metal-binding</keyword>
<keyword id="KW-0547">Nucleotide-binding</keyword>
<keyword id="KW-0658">Purine biosynthesis</keyword>
<keyword id="KW-1185">Reference proteome</keyword>
<dbReference type="EC" id="6.3.4.4" evidence="1"/>
<dbReference type="EMBL" id="CP000155">
    <property type="protein sequence ID" value="ABC32046.1"/>
    <property type="molecule type" value="Genomic_DNA"/>
</dbReference>
<dbReference type="RefSeq" id="WP_011399110.1">
    <property type="nucleotide sequence ID" value="NC_007645.1"/>
</dbReference>
<dbReference type="SMR" id="Q2SBC8"/>
<dbReference type="STRING" id="349521.HCH_05377"/>
<dbReference type="KEGG" id="hch:HCH_05377"/>
<dbReference type="eggNOG" id="COG0104">
    <property type="taxonomic scope" value="Bacteria"/>
</dbReference>
<dbReference type="HOGENOM" id="CLU_029848_0_0_6"/>
<dbReference type="OrthoDB" id="9807553at2"/>
<dbReference type="UniPathway" id="UPA00075">
    <property type="reaction ID" value="UER00335"/>
</dbReference>
<dbReference type="Proteomes" id="UP000000238">
    <property type="component" value="Chromosome"/>
</dbReference>
<dbReference type="GO" id="GO:0005737">
    <property type="term" value="C:cytoplasm"/>
    <property type="evidence" value="ECO:0007669"/>
    <property type="project" value="UniProtKB-SubCell"/>
</dbReference>
<dbReference type="GO" id="GO:0004019">
    <property type="term" value="F:adenylosuccinate synthase activity"/>
    <property type="evidence" value="ECO:0007669"/>
    <property type="project" value="UniProtKB-UniRule"/>
</dbReference>
<dbReference type="GO" id="GO:0005525">
    <property type="term" value="F:GTP binding"/>
    <property type="evidence" value="ECO:0007669"/>
    <property type="project" value="UniProtKB-UniRule"/>
</dbReference>
<dbReference type="GO" id="GO:0000287">
    <property type="term" value="F:magnesium ion binding"/>
    <property type="evidence" value="ECO:0007669"/>
    <property type="project" value="UniProtKB-UniRule"/>
</dbReference>
<dbReference type="GO" id="GO:0044208">
    <property type="term" value="P:'de novo' AMP biosynthetic process"/>
    <property type="evidence" value="ECO:0007669"/>
    <property type="project" value="UniProtKB-UniRule"/>
</dbReference>
<dbReference type="GO" id="GO:0046040">
    <property type="term" value="P:IMP metabolic process"/>
    <property type="evidence" value="ECO:0007669"/>
    <property type="project" value="TreeGrafter"/>
</dbReference>
<dbReference type="CDD" id="cd03108">
    <property type="entry name" value="AdSS"/>
    <property type="match status" value="1"/>
</dbReference>
<dbReference type="FunFam" id="1.10.300.10:FF:000001">
    <property type="entry name" value="Adenylosuccinate synthetase"/>
    <property type="match status" value="1"/>
</dbReference>
<dbReference type="FunFam" id="3.90.170.10:FF:000001">
    <property type="entry name" value="Adenylosuccinate synthetase"/>
    <property type="match status" value="1"/>
</dbReference>
<dbReference type="Gene3D" id="3.40.440.10">
    <property type="entry name" value="Adenylosuccinate Synthetase, subunit A, domain 1"/>
    <property type="match status" value="1"/>
</dbReference>
<dbReference type="Gene3D" id="1.10.300.10">
    <property type="entry name" value="Adenylosuccinate Synthetase, subunit A, domain 2"/>
    <property type="match status" value="1"/>
</dbReference>
<dbReference type="Gene3D" id="3.90.170.10">
    <property type="entry name" value="Adenylosuccinate Synthetase, subunit A, domain 3"/>
    <property type="match status" value="1"/>
</dbReference>
<dbReference type="HAMAP" id="MF_00011">
    <property type="entry name" value="Adenylosucc_synth"/>
    <property type="match status" value="1"/>
</dbReference>
<dbReference type="InterPro" id="IPR018220">
    <property type="entry name" value="Adenylosuccin_syn_GTP-bd"/>
</dbReference>
<dbReference type="InterPro" id="IPR033128">
    <property type="entry name" value="Adenylosuccin_syn_Lys_AS"/>
</dbReference>
<dbReference type="InterPro" id="IPR042109">
    <property type="entry name" value="Adenylosuccinate_synth_dom1"/>
</dbReference>
<dbReference type="InterPro" id="IPR042110">
    <property type="entry name" value="Adenylosuccinate_synth_dom2"/>
</dbReference>
<dbReference type="InterPro" id="IPR042111">
    <property type="entry name" value="Adenylosuccinate_synth_dom3"/>
</dbReference>
<dbReference type="InterPro" id="IPR001114">
    <property type="entry name" value="Adenylosuccinate_synthetase"/>
</dbReference>
<dbReference type="InterPro" id="IPR027417">
    <property type="entry name" value="P-loop_NTPase"/>
</dbReference>
<dbReference type="NCBIfam" id="NF002223">
    <property type="entry name" value="PRK01117.1"/>
    <property type="match status" value="1"/>
</dbReference>
<dbReference type="NCBIfam" id="TIGR00184">
    <property type="entry name" value="purA"/>
    <property type="match status" value="1"/>
</dbReference>
<dbReference type="PANTHER" id="PTHR11846">
    <property type="entry name" value="ADENYLOSUCCINATE SYNTHETASE"/>
    <property type="match status" value="1"/>
</dbReference>
<dbReference type="PANTHER" id="PTHR11846:SF0">
    <property type="entry name" value="ADENYLOSUCCINATE SYNTHETASE"/>
    <property type="match status" value="1"/>
</dbReference>
<dbReference type="Pfam" id="PF00709">
    <property type="entry name" value="Adenylsucc_synt"/>
    <property type="match status" value="1"/>
</dbReference>
<dbReference type="SMART" id="SM00788">
    <property type="entry name" value="Adenylsucc_synt"/>
    <property type="match status" value="1"/>
</dbReference>
<dbReference type="SUPFAM" id="SSF52540">
    <property type="entry name" value="P-loop containing nucleoside triphosphate hydrolases"/>
    <property type="match status" value="1"/>
</dbReference>
<dbReference type="PROSITE" id="PS01266">
    <property type="entry name" value="ADENYLOSUCCIN_SYN_1"/>
    <property type="match status" value="1"/>
</dbReference>
<dbReference type="PROSITE" id="PS00513">
    <property type="entry name" value="ADENYLOSUCCIN_SYN_2"/>
    <property type="match status" value="1"/>
</dbReference>
<feature type="chain" id="PRO_1000000834" description="Adenylosuccinate synthetase">
    <location>
        <begin position="1"/>
        <end position="432"/>
    </location>
</feature>
<feature type="active site" description="Proton acceptor" evidence="1">
    <location>
        <position position="14"/>
    </location>
</feature>
<feature type="active site" description="Proton donor" evidence="1">
    <location>
        <position position="42"/>
    </location>
</feature>
<feature type="binding site" evidence="1">
    <location>
        <begin position="13"/>
        <end position="19"/>
    </location>
    <ligand>
        <name>GTP</name>
        <dbReference type="ChEBI" id="CHEBI:37565"/>
    </ligand>
</feature>
<feature type="binding site" description="in other chain" evidence="1">
    <location>
        <begin position="14"/>
        <end position="17"/>
    </location>
    <ligand>
        <name>IMP</name>
        <dbReference type="ChEBI" id="CHEBI:58053"/>
        <note>ligand shared between dimeric partners</note>
    </ligand>
</feature>
<feature type="binding site" evidence="1">
    <location>
        <position position="14"/>
    </location>
    <ligand>
        <name>Mg(2+)</name>
        <dbReference type="ChEBI" id="CHEBI:18420"/>
    </ligand>
</feature>
<feature type="binding site" description="in other chain" evidence="1">
    <location>
        <begin position="39"/>
        <end position="42"/>
    </location>
    <ligand>
        <name>IMP</name>
        <dbReference type="ChEBI" id="CHEBI:58053"/>
        <note>ligand shared between dimeric partners</note>
    </ligand>
</feature>
<feature type="binding site" evidence="1">
    <location>
        <begin position="41"/>
        <end position="43"/>
    </location>
    <ligand>
        <name>GTP</name>
        <dbReference type="ChEBI" id="CHEBI:37565"/>
    </ligand>
</feature>
<feature type="binding site" evidence="1">
    <location>
        <position position="41"/>
    </location>
    <ligand>
        <name>Mg(2+)</name>
        <dbReference type="ChEBI" id="CHEBI:18420"/>
    </ligand>
</feature>
<feature type="binding site" description="in other chain" evidence="1">
    <location>
        <position position="130"/>
    </location>
    <ligand>
        <name>IMP</name>
        <dbReference type="ChEBI" id="CHEBI:58053"/>
        <note>ligand shared between dimeric partners</note>
    </ligand>
</feature>
<feature type="binding site" evidence="1">
    <location>
        <position position="144"/>
    </location>
    <ligand>
        <name>IMP</name>
        <dbReference type="ChEBI" id="CHEBI:58053"/>
        <note>ligand shared between dimeric partners</note>
    </ligand>
</feature>
<feature type="binding site" description="in other chain" evidence="1">
    <location>
        <position position="225"/>
    </location>
    <ligand>
        <name>IMP</name>
        <dbReference type="ChEBI" id="CHEBI:58053"/>
        <note>ligand shared between dimeric partners</note>
    </ligand>
</feature>
<feature type="binding site" description="in other chain" evidence="1">
    <location>
        <position position="240"/>
    </location>
    <ligand>
        <name>IMP</name>
        <dbReference type="ChEBI" id="CHEBI:58053"/>
        <note>ligand shared between dimeric partners</note>
    </ligand>
</feature>
<feature type="binding site" evidence="1">
    <location>
        <begin position="300"/>
        <end position="306"/>
    </location>
    <ligand>
        <name>substrate</name>
    </ligand>
</feature>
<feature type="binding site" description="in other chain" evidence="1">
    <location>
        <position position="304"/>
    </location>
    <ligand>
        <name>IMP</name>
        <dbReference type="ChEBI" id="CHEBI:58053"/>
        <note>ligand shared between dimeric partners</note>
    </ligand>
</feature>
<feature type="binding site" evidence="1">
    <location>
        <position position="306"/>
    </location>
    <ligand>
        <name>GTP</name>
        <dbReference type="ChEBI" id="CHEBI:37565"/>
    </ligand>
</feature>
<feature type="binding site" evidence="1">
    <location>
        <begin position="332"/>
        <end position="334"/>
    </location>
    <ligand>
        <name>GTP</name>
        <dbReference type="ChEBI" id="CHEBI:37565"/>
    </ligand>
</feature>
<feature type="binding site" evidence="1">
    <location>
        <begin position="415"/>
        <end position="417"/>
    </location>
    <ligand>
        <name>GTP</name>
        <dbReference type="ChEBI" id="CHEBI:37565"/>
    </ligand>
</feature>
<accession>Q2SBC8</accession>
<reference key="1">
    <citation type="journal article" date="2005" name="Nucleic Acids Res.">
        <title>Genomic blueprint of Hahella chejuensis, a marine microbe producing an algicidal agent.</title>
        <authorList>
            <person name="Jeong H."/>
            <person name="Yim J.H."/>
            <person name="Lee C."/>
            <person name="Choi S.-H."/>
            <person name="Park Y.K."/>
            <person name="Yoon S.H."/>
            <person name="Hur C.-G."/>
            <person name="Kang H.-Y."/>
            <person name="Kim D."/>
            <person name="Lee H.H."/>
            <person name="Park K.H."/>
            <person name="Park S.-H."/>
            <person name="Park H.-S."/>
            <person name="Lee H.K."/>
            <person name="Oh T.K."/>
            <person name="Kim J.F."/>
        </authorList>
    </citation>
    <scope>NUCLEOTIDE SEQUENCE [LARGE SCALE GENOMIC DNA]</scope>
    <source>
        <strain>KCTC 2396</strain>
    </source>
</reference>
<protein>
    <recommendedName>
        <fullName evidence="1">Adenylosuccinate synthetase</fullName>
        <shortName evidence="1">AMPSase</shortName>
        <shortName evidence="1">AdSS</shortName>
        <ecNumber evidence="1">6.3.4.4</ecNumber>
    </recommendedName>
    <alternativeName>
        <fullName evidence="1">IMP--aspartate ligase</fullName>
    </alternativeName>
</protein>
<organism>
    <name type="scientific">Hahella chejuensis (strain KCTC 2396)</name>
    <dbReference type="NCBI Taxonomy" id="349521"/>
    <lineage>
        <taxon>Bacteria</taxon>
        <taxon>Pseudomonadati</taxon>
        <taxon>Pseudomonadota</taxon>
        <taxon>Gammaproteobacteria</taxon>
        <taxon>Oceanospirillales</taxon>
        <taxon>Hahellaceae</taxon>
        <taxon>Hahella</taxon>
    </lineage>
</organism>
<proteinExistence type="inferred from homology"/>
<evidence type="ECO:0000255" key="1">
    <source>
        <dbReference type="HAMAP-Rule" id="MF_00011"/>
    </source>
</evidence>
<comment type="function">
    <text evidence="1">Plays an important role in the de novo pathway of purine nucleotide biosynthesis. Catalyzes the first committed step in the biosynthesis of AMP from IMP.</text>
</comment>
<comment type="catalytic activity">
    <reaction evidence="1">
        <text>IMP + L-aspartate + GTP = N(6)-(1,2-dicarboxyethyl)-AMP + GDP + phosphate + 2 H(+)</text>
        <dbReference type="Rhea" id="RHEA:15753"/>
        <dbReference type="ChEBI" id="CHEBI:15378"/>
        <dbReference type="ChEBI" id="CHEBI:29991"/>
        <dbReference type="ChEBI" id="CHEBI:37565"/>
        <dbReference type="ChEBI" id="CHEBI:43474"/>
        <dbReference type="ChEBI" id="CHEBI:57567"/>
        <dbReference type="ChEBI" id="CHEBI:58053"/>
        <dbReference type="ChEBI" id="CHEBI:58189"/>
        <dbReference type="EC" id="6.3.4.4"/>
    </reaction>
</comment>
<comment type="cofactor">
    <cofactor evidence="1">
        <name>Mg(2+)</name>
        <dbReference type="ChEBI" id="CHEBI:18420"/>
    </cofactor>
    <text evidence="1">Binds 1 Mg(2+) ion per subunit.</text>
</comment>
<comment type="pathway">
    <text evidence="1">Purine metabolism; AMP biosynthesis via de novo pathway; AMP from IMP: step 1/2.</text>
</comment>
<comment type="subunit">
    <text evidence="1">Homodimer.</text>
</comment>
<comment type="subcellular location">
    <subcellularLocation>
        <location evidence="1">Cytoplasm</location>
    </subcellularLocation>
</comment>
<comment type="similarity">
    <text evidence="1">Belongs to the adenylosuccinate synthetase family.</text>
</comment>
<name>PURA_HAHCH</name>